<proteinExistence type="inferred from homology"/>
<evidence type="ECO:0000250" key="1">
    <source>
        <dbReference type="UniProtKB" id="P0ABN1"/>
    </source>
</evidence>
<evidence type="ECO:0000255" key="2"/>
<evidence type="ECO:0000305" key="3"/>
<name>KDGL_SINSX</name>
<comment type="function">
    <text evidence="1">Catalyzes the ATP-dependent phosphorylation of sn-l,2-diacylglycerol (DAG) to phosphatidic acid. Involved in the recycling of diacylglycerol produced as a by-product during membrane-derived oligosaccharide (MDO) biosynthesis.</text>
</comment>
<comment type="catalytic activity">
    <reaction evidence="1">
        <text>a 1,2-diacyl-sn-glycerol + ATP = a 1,2-diacyl-sn-glycero-3-phosphate + ADP + H(+)</text>
        <dbReference type="Rhea" id="RHEA:10272"/>
        <dbReference type="ChEBI" id="CHEBI:15378"/>
        <dbReference type="ChEBI" id="CHEBI:17815"/>
        <dbReference type="ChEBI" id="CHEBI:30616"/>
        <dbReference type="ChEBI" id="CHEBI:58608"/>
        <dbReference type="ChEBI" id="CHEBI:456216"/>
        <dbReference type="EC" id="2.7.1.107"/>
    </reaction>
</comment>
<comment type="cofactor">
    <cofactor evidence="1">
        <name>Mg(2+)</name>
        <dbReference type="ChEBI" id="CHEBI:18420"/>
    </cofactor>
</comment>
<comment type="subcellular location">
    <subcellularLocation>
        <location evidence="1">Cell inner membrane</location>
        <topology evidence="1">Multi-pass membrane protein</topology>
    </subcellularLocation>
</comment>
<comment type="similarity">
    <text evidence="3">Belongs to the bacterial diacylglycerol kinase family.</text>
</comment>
<comment type="caution">
    <text evidence="3">Was originally thought to originate from Pseudomonas denitrificans, but similarity searches show that the sequence is much closer to Sinorhizobium. The entry's taxonomy has been changed.</text>
</comment>
<sequence length="137" mass="14802">MDAKNTTHRIGQTGPVEKQTGIRHLFAAASYSLGGAKRLIGEAAFRHELIAFAAAMIAFIIVGATFFQYVAMAILFLLMMAFEAINTAIEEIVDRVSPEISEMGKNAKDLGSFACLCLIVANGVYAAYVVIFDGFMN</sequence>
<protein>
    <recommendedName>
        <fullName evidence="1">Diacylglycerol kinase</fullName>
        <shortName evidence="1">DAGK</shortName>
        <ecNumber evidence="1">2.7.1.107</ecNumber>
    </recommendedName>
    <alternativeName>
        <fullName evidence="1">Diglyceride kinase</fullName>
        <shortName evidence="1">DGK</shortName>
    </alternativeName>
</protein>
<feature type="chain" id="PRO_0000195266" description="Diacylglycerol kinase">
    <location>
        <begin position="1"/>
        <end position="137"/>
    </location>
</feature>
<feature type="transmembrane region" description="Helical" evidence="2">
    <location>
        <begin position="49"/>
        <end position="67"/>
    </location>
</feature>
<feature type="transmembrane region" description="Helical" evidence="2">
    <location>
        <begin position="73"/>
        <end position="89"/>
    </location>
</feature>
<feature type="transmembrane region" description="Helical" evidence="2">
    <location>
        <begin position="112"/>
        <end position="132"/>
    </location>
</feature>
<feature type="active site" description="Proton acceptor" evidence="1">
    <location>
        <position position="83"/>
    </location>
</feature>
<feature type="binding site" evidence="1">
    <location>
        <position position="42"/>
    </location>
    <ligand>
        <name>a divalent metal cation</name>
        <dbReference type="ChEBI" id="CHEBI:60240"/>
    </ligand>
</feature>
<feature type="binding site" evidence="1">
    <location>
        <position position="90"/>
    </location>
    <ligand>
        <name>a divalent metal cation</name>
        <dbReference type="ChEBI" id="CHEBI:60240"/>
    </ligand>
</feature>
<keyword id="KW-0067">ATP-binding</keyword>
<keyword id="KW-0997">Cell inner membrane</keyword>
<keyword id="KW-1003">Cell membrane</keyword>
<keyword id="KW-0418">Kinase</keyword>
<keyword id="KW-0444">Lipid biosynthesis</keyword>
<keyword id="KW-0443">Lipid metabolism</keyword>
<keyword id="KW-0460">Magnesium</keyword>
<keyword id="KW-0472">Membrane</keyword>
<keyword id="KW-0479">Metal-binding</keyword>
<keyword id="KW-0547">Nucleotide-binding</keyword>
<keyword id="KW-0594">Phospholipid biosynthesis</keyword>
<keyword id="KW-1208">Phospholipid metabolism</keyword>
<keyword id="KW-0808">Transferase</keyword>
<keyword id="KW-0812">Transmembrane</keyword>
<keyword id="KW-1133">Transmembrane helix</keyword>
<organism>
    <name type="scientific">Sinorhizobium sp</name>
    <dbReference type="NCBI Taxonomy" id="42445"/>
    <lineage>
        <taxon>Bacteria</taxon>
        <taxon>Pseudomonadati</taxon>
        <taxon>Pseudomonadota</taxon>
        <taxon>Alphaproteobacteria</taxon>
        <taxon>Hyphomicrobiales</taxon>
        <taxon>Rhizobiaceae</taxon>
        <taxon>Sinorhizobium/Ensifer group</taxon>
        <taxon>Sinorhizobium</taxon>
    </lineage>
</organism>
<dbReference type="EC" id="2.7.1.107" evidence="1"/>
<dbReference type="EMBL" id="M62868">
    <property type="protein sequence ID" value="AAA25789.1"/>
    <property type="molecule type" value="Genomic_DNA"/>
</dbReference>
<dbReference type="SMR" id="P29945"/>
<dbReference type="GO" id="GO:0005886">
    <property type="term" value="C:plasma membrane"/>
    <property type="evidence" value="ECO:0007669"/>
    <property type="project" value="UniProtKB-SubCell"/>
</dbReference>
<dbReference type="GO" id="GO:0005524">
    <property type="term" value="F:ATP binding"/>
    <property type="evidence" value="ECO:0007669"/>
    <property type="project" value="UniProtKB-KW"/>
</dbReference>
<dbReference type="GO" id="GO:0004143">
    <property type="term" value="F:ATP-dependent diacylglycerol kinase activity"/>
    <property type="evidence" value="ECO:0007669"/>
    <property type="project" value="UniProtKB-EC"/>
</dbReference>
<dbReference type="GO" id="GO:0046872">
    <property type="term" value="F:metal ion binding"/>
    <property type="evidence" value="ECO:0007669"/>
    <property type="project" value="UniProtKB-KW"/>
</dbReference>
<dbReference type="GO" id="GO:0006654">
    <property type="term" value="P:phosphatidic acid biosynthetic process"/>
    <property type="evidence" value="ECO:0007669"/>
    <property type="project" value="InterPro"/>
</dbReference>
<dbReference type="CDD" id="cd14264">
    <property type="entry name" value="DAGK_IM"/>
    <property type="match status" value="1"/>
</dbReference>
<dbReference type="Gene3D" id="1.10.287.3610">
    <property type="match status" value="1"/>
</dbReference>
<dbReference type="InterPro" id="IPR000829">
    <property type="entry name" value="DAGK"/>
</dbReference>
<dbReference type="InterPro" id="IPR033718">
    <property type="entry name" value="DAGK_prok"/>
</dbReference>
<dbReference type="InterPro" id="IPR036945">
    <property type="entry name" value="DAGK_sf"/>
</dbReference>
<dbReference type="PANTHER" id="PTHR34299">
    <property type="entry name" value="DIACYLGLYCEROL KINASE"/>
    <property type="match status" value="1"/>
</dbReference>
<dbReference type="PANTHER" id="PTHR34299:SF1">
    <property type="entry name" value="DIACYLGLYCEROL KINASE"/>
    <property type="match status" value="1"/>
</dbReference>
<dbReference type="Pfam" id="PF01219">
    <property type="entry name" value="DAGK_prokar"/>
    <property type="match status" value="1"/>
</dbReference>
<dbReference type="PROSITE" id="PS01069">
    <property type="entry name" value="DAGK_PROKAR"/>
    <property type="match status" value="1"/>
</dbReference>
<gene>
    <name type="primary">dgkA</name>
</gene>
<reference key="1">
    <citation type="journal article" date="1991" name="J. Bacteriol.">
        <title>Genetic analysis, nucleotide sequence, and products of two Pseudomonas denitrificans cob genes encoding nicotinate-nucleotide: dimethylbenzimidazole phosphoribosyltransferase and cobalamin (5'-phosphate) synthase.</title>
        <authorList>
            <person name="Cameron B."/>
            <person name="Blanche F."/>
            <person name="Rouyez M.-C."/>
            <person name="Bisch D."/>
            <person name="Famechon A."/>
            <person name="Couder M."/>
            <person name="Cauchois L."/>
            <person name="Thibaut D."/>
            <person name="Debussche L."/>
            <person name="Crouzet J."/>
        </authorList>
    </citation>
    <scope>NUCLEOTIDE SEQUENCE [GENOMIC DNA]</scope>
    <source>
        <strain>SC510</strain>
    </source>
</reference>
<accession>P29945</accession>